<gene>
    <name evidence="1" type="primary">AQP5</name>
</gene>
<name>AQP5_PIG</name>
<feature type="chain" id="PRO_0000327507" description="Aquaporin-5">
    <location>
        <begin position="1"/>
        <end position="265"/>
    </location>
</feature>
<feature type="topological domain" description="Cytoplasmic" evidence="4">
    <location>
        <begin position="1"/>
        <end position="12"/>
    </location>
</feature>
<feature type="transmembrane region" description="Helical" evidence="1">
    <location>
        <begin position="13"/>
        <end position="33"/>
    </location>
</feature>
<feature type="topological domain" description="Extracellular" evidence="4">
    <location>
        <begin position="34"/>
        <end position="39"/>
    </location>
</feature>
<feature type="transmembrane region" description="Helical" evidence="1">
    <location>
        <begin position="40"/>
        <end position="60"/>
    </location>
</feature>
<feature type="topological domain" description="Cytoplasmic" evidence="4">
    <location>
        <begin position="61"/>
        <end position="65"/>
    </location>
</feature>
<feature type="intramembrane region" description="Discontinuously helical" evidence="1">
    <location>
        <begin position="66"/>
        <end position="74"/>
    </location>
</feature>
<feature type="topological domain" description="Cytoplasmic" evidence="4">
    <location>
        <begin position="75"/>
        <end position="87"/>
    </location>
</feature>
<feature type="transmembrane region" description="Helical" evidence="1">
    <location>
        <begin position="88"/>
        <end position="108"/>
    </location>
</feature>
<feature type="topological domain" description="Extracellular" evidence="4">
    <location>
        <begin position="109"/>
        <end position="126"/>
    </location>
</feature>
<feature type="transmembrane region" description="Helical" evidence="1">
    <location>
        <begin position="127"/>
        <end position="147"/>
    </location>
</feature>
<feature type="topological domain" description="Cytoplasmic" evidence="4">
    <location>
        <begin position="148"/>
        <end position="158"/>
    </location>
</feature>
<feature type="transmembrane region" description="Helical" evidence="1">
    <location>
        <begin position="159"/>
        <end position="179"/>
    </location>
</feature>
<feature type="topological domain" description="Extracellular" evidence="4">
    <location>
        <position position="180"/>
    </location>
</feature>
<feature type="intramembrane region" description="Discontinuously helical" evidence="1">
    <location>
        <begin position="181"/>
        <end position="191"/>
    </location>
</feature>
<feature type="topological domain" description="Extracellular" evidence="4">
    <location>
        <begin position="192"/>
        <end position="203"/>
    </location>
</feature>
<feature type="transmembrane region" description="Helical" evidence="1">
    <location>
        <begin position="204"/>
        <end position="224"/>
    </location>
</feature>
<feature type="topological domain" description="Cytoplasmic" evidence="4">
    <location>
        <begin position="225"/>
        <end position="265"/>
    </location>
</feature>
<feature type="short sequence motif" description="NPA 1" evidence="1">
    <location>
        <begin position="69"/>
        <end position="71"/>
    </location>
</feature>
<feature type="short sequence motif" description="NPA 2" evidence="1">
    <location>
        <begin position="185"/>
        <end position="187"/>
    </location>
</feature>
<feature type="glycosylation site" description="N-linked (GlcNAc...) asparagine" evidence="3">
    <location>
        <position position="124"/>
    </location>
</feature>
<proteinExistence type="evidence at transcript level"/>
<accession>A8W649</accession>
<dbReference type="EMBL" id="EU192130">
    <property type="protein sequence ID" value="ABW69254.1"/>
    <property type="molecule type" value="mRNA"/>
</dbReference>
<dbReference type="RefSeq" id="NP_001103894.1">
    <property type="nucleotide sequence ID" value="NM_001110424.1"/>
</dbReference>
<dbReference type="SMR" id="A8W649"/>
<dbReference type="FunCoup" id="A8W649">
    <property type="interactions" value="53"/>
</dbReference>
<dbReference type="STRING" id="9823.ENSSSCP00000000223"/>
<dbReference type="GlyCosmos" id="A8W649">
    <property type="glycosylation" value="1 site, No reported glycans"/>
</dbReference>
<dbReference type="GlyGen" id="A8W649">
    <property type="glycosylation" value="1 site"/>
</dbReference>
<dbReference type="PaxDb" id="9823-ENSSSCP00000000223"/>
<dbReference type="PeptideAtlas" id="A8W649"/>
<dbReference type="Ensembl" id="ENSSSCT00000000226.4">
    <property type="protein sequence ID" value="ENSSSCP00000000223.2"/>
    <property type="gene ID" value="ENSSSCG00000000211.4"/>
</dbReference>
<dbReference type="Ensembl" id="ENSSSCT00015108628.1">
    <property type="protein sequence ID" value="ENSSSCP00015046089.1"/>
    <property type="gene ID" value="ENSSSCG00015079931.1"/>
</dbReference>
<dbReference type="Ensembl" id="ENSSSCT00025100432.1">
    <property type="protein sequence ID" value="ENSSSCP00025044332.1"/>
    <property type="gene ID" value="ENSSSCG00025072976.1"/>
</dbReference>
<dbReference type="Ensembl" id="ENSSSCT00030076659.1">
    <property type="protein sequence ID" value="ENSSSCP00030034986.1"/>
    <property type="gene ID" value="ENSSSCG00030055024.1"/>
</dbReference>
<dbReference type="Ensembl" id="ENSSSCT00040035338.1">
    <property type="protein sequence ID" value="ENSSSCP00040014653.1"/>
    <property type="gene ID" value="ENSSSCG00040026381.1"/>
</dbReference>
<dbReference type="Ensembl" id="ENSSSCT00045012085.1">
    <property type="protein sequence ID" value="ENSSSCP00045008231.1"/>
    <property type="gene ID" value="ENSSSCG00045007281.1"/>
</dbReference>
<dbReference type="Ensembl" id="ENSSSCT00050086314.1">
    <property type="protein sequence ID" value="ENSSSCP00050037040.1"/>
    <property type="gene ID" value="ENSSSCG00050063386.1"/>
</dbReference>
<dbReference type="Ensembl" id="ENSSSCT00055047394.1">
    <property type="protein sequence ID" value="ENSSSCP00055037825.1"/>
    <property type="gene ID" value="ENSSSCG00055024042.1"/>
</dbReference>
<dbReference type="Ensembl" id="ENSSSCT00060023427.1">
    <property type="protein sequence ID" value="ENSSSCP00060009794.1"/>
    <property type="gene ID" value="ENSSSCG00060017497.1"/>
</dbReference>
<dbReference type="Ensembl" id="ENSSSCT00065085223.1">
    <property type="protein sequence ID" value="ENSSSCP00065037227.1"/>
    <property type="gene ID" value="ENSSSCG00065062130.1"/>
</dbReference>
<dbReference type="Ensembl" id="ENSSSCT00070061309.1">
    <property type="protein sequence ID" value="ENSSSCP00070052257.1"/>
    <property type="gene ID" value="ENSSSCG00070030456.1"/>
</dbReference>
<dbReference type="Ensembl" id="ENSSSCT00085046346">
    <property type="protein sequence ID" value="ENSSSCP00085032311"/>
    <property type="gene ID" value="ENSSSCG00085024158"/>
</dbReference>
<dbReference type="Ensembl" id="ENSSSCT00090033351">
    <property type="protein sequence ID" value="ENSSSCP00090020777"/>
    <property type="gene ID" value="ENSSSCG00090018873"/>
</dbReference>
<dbReference type="Ensembl" id="ENSSSCT00110064381">
    <property type="protein sequence ID" value="ENSSSCP00110045062"/>
    <property type="gene ID" value="ENSSSCG00110033817"/>
</dbReference>
<dbReference type="Ensembl" id="ENSSSCT00115035034">
    <property type="protein sequence ID" value="ENSSSCP00115033225"/>
    <property type="gene ID" value="ENSSSCG00115019794"/>
</dbReference>
<dbReference type="Ensembl" id="ENSSSCT00130026605">
    <property type="protein sequence ID" value="ENSSSCP00130024559"/>
    <property type="gene ID" value="ENSSSCG00130018098"/>
</dbReference>
<dbReference type="GeneID" id="100126278"/>
<dbReference type="KEGG" id="ssc:100126278"/>
<dbReference type="CTD" id="362"/>
<dbReference type="VGNC" id="VGNC:85433">
    <property type="gene designation" value="AQP5"/>
</dbReference>
<dbReference type="eggNOG" id="KOG0223">
    <property type="taxonomic scope" value="Eukaryota"/>
</dbReference>
<dbReference type="GeneTree" id="ENSGT00940000161557"/>
<dbReference type="HOGENOM" id="CLU_020019_3_3_1"/>
<dbReference type="InParanoid" id="A8W649"/>
<dbReference type="OMA" id="FWVGPIS"/>
<dbReference type="OrthoDB" id="3222at2759"/>
<dbReference type="TreeFam" id="TF312940"/>
<dbReference type="Reactome" id="R-SSC-432047">
    <property type="pathway name" value="Passive transport by Aquaporins"/>
</dbReference>
<dbReference type="Proteomes" id="UP000008227">
    <property type="component" value="Chromosome 5"/>
</dbReference>
<dbReference type="Proteomes" id="UP000314985">
    <property type="component" value="Chromosome 5"/>
</dbReference>
<dbReference type="Proteomes" id="UP000694570">
    <property type="component" value="Unplaced"/>
</dbReference>
<dbReference type="Proteomes" id="UP000694571">
    <property type="component" value="Unplaced"/>
</dbReference>
<dbReference type="Proteomes" id="UP000694720">
    <property type="component" value="Unplaced"/>
</dbReference>
<dbReference type="Proteomes" id="UP000694722">
    <property type="component" value="Unplaced"/>
</dbReference>
<dbReference type="Proteomes" id="UP000694723">
    <property type="component" value="Unplaced"/>
</dbReference>
<dbReference type="Proteomes" id="UP000694724">
    <property type="component" value="Unplaced"/>
</dbReference>
<dbReference type="Proteomes" id="UP000694725">
    <property type="component" value="Unplaced"/>
</dbReference>
<dbReference type="Proteomes" id="UP000694726">
    <property type="component" value="Unplaced"/>
</dbReference>
<dbReference type="Proteomes" id="UP000694727">
    <property type="component" value="Unplaced"/>
</dbReference>
<dbReference type="Proteomes" id="UP000694728">
    <property type="component" value="Unplaced"/>
</dbReference>
<dbReference type="Bgee" id="ENSSSCG00000000211">
    <property type="expression patterns" value="Expressed in lung and 14 other cell types or tissues"/>
</dbReference>
<dbReference type="GO" id="GO:0016324">
    <property type="term" value="C:apical plasma membrane"/>
    <property type="evidence" value="ECO:0000318"/>
    <property type="project" value="GO_Central"/>
</dbReference>
<dbReference type="GO" id="GO:0009925">
    <property type="term" value="C:basal plasma membrane"/>
    <property type="evidence" value="ECO:0007669"/>
    <property type="project" value="Ensembl"/>
</dbReference>
<dbReference type="GO" id="GO:0030659">
    <property type="term" value="C:cytoplasmic vesicle membrane"/>
    <property type="evidence" value="ECO:0000250"/>
    <property type="project" value="UniProtKB"/>
</dbReference>
<dbReference type="GO" id="GO:0005783">
    <property type="term" value="C:endoplasmic reticulum"/>
    <property type="evidence" value="ECO:0007669"/>
    <property type="project" value="Ensembl"/>
</dbReference>
<dbReference type="GO" id="GO:0005902">
    <property type="term" value="C:microvillus"/>
    <property type="evidence" value="ECO:0007669"/>
    <property type="project" value="Ensembl"/>
</dbReference>
<dbReference type="GO" id="GO:0005886">
    <property type="term" value="C:plasma membrane"/>
    <property type="evidence" value="ECO:0000250"/>
    <property type="project" value="UniProtKB"/>
</dbReference>
<dbReference type="GO" id="GO:0042802">
    <property type="term" value="F:identical protein binding"/>
    <property type="evidence" value="ECO:0007669"/>
    <property type="project" value="Ensembl"/>
</dbReference>
<dbReference type="GO" id="GO:0015250">
    <property type="term" value="F:water channel activity"/>
    <property type="evidence" value="ECO:0000250"/>
    <property type="project" value="UniProtKB"/>
</dbReference>
<dbReference type="GO" id="GO:0048593">
    <property type="term" value="P:camera-type eye morphogenesis"/>
    <property type="evidence" value="ECO:0007669"/>
    <property type="project" value="Ensembl"/>
</dbReference>
<dbReference type="GO" id="GO:0015670">
    <property type="term" value="P:carbon dioxide transport"/>
    <property type="evidence" value="ECO:0000318"/>
    <property type="project" value="GO_Central"/>
</dbReference>
<dbReference type="GO" id="GO:0071476">
    <property type="term" value="P:cellular hypotonic response"/>
    <property type="evidence" value="ECO:0000250"/>
    <property type="project" value="UniProtKB"/>
</dbReference>
<dbReference type="GO" id="GO:0042476">
    <property type="term" value="P:odontogenesis"/>
    <property type="evidence" value="ECO:0007669"/>
    <property type="project" value="Ensembl"/>
</dbReference>
<dbReference type="GO" id="GO:0030157">
    <property type="term" value="P:pancreatic juice secretion"/>
    <property type="evidence" value="ECO:0007669"/>
    <property type="project" value="Ensembl"/>
</dbReference>
<dbReference type="GO" id="GO:0051289">
    <property type="term" value="P:protein homotetramerization"/>
    <property type="evidence" value="ECO:0000250"/>
    <property type="project" value="UniProtKB"/>
</dbReference>
<dbReference type="GO" id="GO:0046541">
    <property type="term" value="P:saliva secretion"/>
    <property type="evidence" value="ECO:0007669"/>
    <property type="project" value="Ensembl"/>
</dbReference>
<dbReference type="GO" id="GO:0006833">
    <property type="term" value="P:water transport"/>
    <property type="evidence" value="ECO:0000250"/>
    <property type="project" value="UniProtKB"/>
</dbReference>
<dbReference type="CDD" id="cd00333">
    <property type="entry name" value="MIP"/>
    <property type="match status" value="1"/>
</dbReference>
<dbReference type="FunFam" id="1.20.1080.10:FF:000003">
    <property type="entry name" value="Lens fiber major intrinsic"/>
    <property type="match status" value="1"/>
</dbReference>
<dbReference type="Gene3D" id="1.20.1080.10">
    <property type="entry name" value="Glycerol uptake facilitator protein"/>
    <property type="match status" value="1"/>
</dbReference>
<dbReference type="InterPro" id="IPR023271">
    <property type="entry name" value="Aquaporin-like"/>
</dbReference>
<dbReference type="InterPro" id="IPR023276">
    <property type="entry name" value="Aquaporin_5"/>
</dbReference>
<dbReference type="InterPro" id="IPR034294">
    <property type="entry name" value="Aquaporin_transptr"/>
</dbReference>
<dbReference type="InterPro" id="IPR000425">
    <property type="entry name" value="MIP"/>
</dbReference>
<dbReference type="InterPro" id="IPR022357">
    <property type="entry name" value="MIP_CS"/>
</dbReference>
<dbReference type="NCBIfam" id="TIGR00861">
    <property type="entry name" value="MIP"/>
    <property type="match status" value="1"/>
</dbReference>
<dbReference type="PANTHER" id="PTHR19139">
    <property type="entry name" value="AQUAPORIN TRANSPORTER"/>
    <property type="match status" value="1"/>
</dbReference>
<dbReference type="PANTHER" id="PTHR19139:SF38">
    <property type="entry name" value="AQUAPORIN-5"/>
    <property type="match status" value="1"/>
</dbReference>
<dbReference type="Pfam" id="PF00230">
    <property type="entry name" value="MIP"/>
    <property type="match status" value="1"/>
</dbReference>
<dbReference type="PRINTS" id="PR02017">
    <property type="entry name" value="AQUAPORIN5"/>
</dbReference>
<dbReference type="PRINTS" id="PR00783">
    <property type="entry name" value="MINTRINSICP"/>
</dbReference>
<dbReference type="SUPFAM" id="SSF81338">
    <property type="entry name" value="Aquaporin-like"/>
    <property type="match status" value="1"/>
</dbReference>
<dbReference type="PROSITE" id="PS00221">
    <property type="entry name" value="MIP"/>
    <property type="match status" value="1"/>
</dbReference>
<organism>
    <name type="scientific">Sus scrofa</name>
    <name type="common">Pig</name>
    <dbReference type="NCBI Taxonomy" id="9823"/>
    <lineage>
        <taxon>Eukaryota</taxon>
        <taxon>Metazoa</taxon>
        <taxon>Chordata</taxon>
        <taxon>Craniata</taxon>
        <taxon>Vertebrata</taxon>
        <taxon>Euteleostomi</taxon>
        <taxon>Mammalia</taxon>
        <taxon>Eutheria</taxon>
        <taxon>Laurasiatheria</taxon>
        <taxon>Artiodactyla</taxon>
        <taxon>Suina</taxon>
        <taxon>Suidae</taxon>
        <taxon>Sus</taxon>
    </lineage>
</organism>
<evidence type="ECO:0000250" key="1">
    <source>
        <dbReference type="UniProtKB" id="P55064"/>
    </source>
</evidence>
<evidence type="ECO:0000250" key="2">
    <source>
        <dbReference type="UniProtKB" id="Q9WTY4"/>
    </source>
</evidence>
<evidence type="ECO:0000255" key="3"/>
<evidence type="ECO:0000305" key="4"/>
<keyword id="KW-1003">Cell membrane</keyword>
<keyword id="KW-0968">Cytoplasmic vesicle</keyword>
<keyword id="KW-0325">Glycoprotein</keyword>
<keyword id="KW-0472">Membrane</keyword>
<keyword id="KW-1185">Reference proteome</keyword>
<keyword id="KW-0677">Repeat</keyword>
<keyword id="KW-0812">Transmembrane</keyword>
<keyword id="KW-1133">Transmembrane helix</keyword>
<keyword id="KW-0813">Transport</keyword>
<reference key="1">
    <citation type="submission" date="2007-10" db="EMBL/GenBank/DDBJ databases">
        <title>Molecular cloning and expression of porcine aquaporin 5 (SAQP5).</title>
        <authorList>
            <person name="Zhang Z.-Q."/>
            <person name="Wang Y.-L."/>
            <person name="Yang G.-Y."/>
            <person name="Wang W.-J."/>
            <person name="Tai Y.-L."/>
            <person name="Han L.-Q."/>
        </authorList>
    </citation>
    <scope>NUCLEOTIDE SEQUENCE [MRNA]</scope>
</reference>
<sequence>MKKEVCSLAFLKAVFAEFLATLIFVFFGLASALKWPSALPTILQIALAFGLAIGTLAQALGPVSGGHINPAITLALLVGNQISLLRAVFYVVAQLVGAIAGAGILYGLAPGNARGNLAVNSLNNNTTPGQAVVVEMILTFQLALCIFSSTDSRRTSPVGSPALSIGLSVTLGHLVGIYFTGCSMNPARSFGPAVVMNRFSPSHWVFWVGPIVGAAVAAILYFYLLFPNSLSLSERVAVVKGTYESEEDWEEQREERKKTMELTAH</sequence>
<comment type="function">
    <text evidence="1 2">Aquaporins form homotetrameric transmembrane channels, with each monomer independently mediating water transport across the plasma membrane along its osmotic gradient (By similarity). Plays an important role in fluid secretion in salivary glands (By similarity). Required for TRPV4 activation by hypotonicity. Together with TRPV4, controls regulatory volume decrease in salivary epithelial cells (By similarity). Seems to play a redundant role in water transport in the eye, lung and in sweat glands (By similarity).</text>
</comment>
<comment type="catalytic activity">
    <reaction evidence="1">
        <text>H2O(in) = H2O(out)</text>
        <dbReference type="Rhea" id="RHEA:29667"/>
        <dbReference type="ChEBI" id="CHEBI:15377"/>
    </reaction>
</comment>
<comment type="subunit">
    <text evidence="1">Homotetramer; each monomer provides an independent water pore. Interacts with TRPV4; the interaction is probably indirect and regulates TRPV4 activation by hypotonicity.</text>
</comment>
<comment type="subcellular location">
    <subcellularLocation>
        <location evidence="2">Apical cell membrane</location>
        <topology evidence="1">Multi-pass membrane protein</topology>
    </subcellularLocation>
    <subcellularLocation>
        <location evidence="1">Cell membrane</location>
        <topology evidence="1">Multi-pass membrane protein</topology>
    </subcellularLocation>
    <subcellularLocation>
        <location evidence="1">Cytoplasmic vesicle membrane</location>
        <topology evidence="1">Multi-pass membrane protein</topology>
    </subcellularLocation>
    <text evidence="1">Hypotonicity increases location at the cell membrane. Phosphorylation decreases location at the cell membrane.</text>
</comment>
<comment type="domain">
    <text evidence="1">Aquaporins contain two tandem repeats each containing three membrane-spanning domains and a pore-forming loop with the signature motif Asn-Pro-Ala (NPA).</text>
</comment>
<comment type="similarity">
    <text evidence="4">Belongs to the MIP/aquaporin (TC 1.A.8) family.</text>
</comment>
<protein>
    <recommendedName>
        <fullName evidence="1">Aquaporin-5</fullName>
        <shortName>AQP-5</shortName>
    </recommendedName>
</protein>